<name>GCAL1_ARATH</name>
<proteinExistence type="evidence at protein level"/>
<comment type="function">
    <text>Involved in complex I assembly in mitochondria and respiration.</text>
</comment>
<comment type="subunit">
    <text evidence="5">Component of the mitochondrial oxidoreductase respiratory chain complex I; element of the extra matrix-exposed domain, which is attached to the membrane arm of this complex. Interacts with GAMMACA2.</text>
</comment>
<comment type="interaction">
    <interactant intactId="EBI-532008">
        <id>Q9FMV1</id>
    </interactant>
    <interactant intactId="EBI-531995">
        <id>Q9C6B3</id>
        <label>GAMMACA2</label>
    </interactant>
    <organismsDiffer>false</organismsDiffer>
    <experiments>2</experiments>
</comment>
<comment type="subcellular location">
    <subcellularLocation>
        <location evidence="3 4 5">Mitochondrion membrane</location>
        <topology evidence="3 4 5">Peripheral membrane protein</topology>
        <orientation evidence="3 4 5">Matrix side</orientation>
    </subcellularLocation>
    <text evidence="1">Probably integral to the membrane.</text>
</comment>
<comment type="alternative products">
    <event type="alternative splicing"/>
    <isoform>
        <id>Q9FMV1-1</id>
        <name>1</name>
        <sequence type="displayed"/>
    </isoform>
    <text>A number of isoforms are produced. According to EST sequences.</text>
</comment>
<comment type="similarity">
    <text evidence="6">Belongs to the gamma-class carbonic anhydrase family.</text>
</comment>
<protein>
    <recommendedName>
        <fullName>Gamma carbonic anhydrase-like 1, mitochondrial</fullName>
        <shortName>AtCAL1</shortName>
        <shortName>GAMMA CAL1</shortName>
    </recommendedName>
</protein>
<accession>Q9FMV1</accession>
<accession>Q8LBM1</accession>
<accession>Q93XY3</accession>
<reference evidence="6" key="1">
    <citation type="journal article" date="1997" name="DNA Res.">
        <title>Structural analysis of Arabidopsis thaliana chromosome 5. III. Sequence features of the regions of 1,191,918 bp covered by seventeen physically assigned P1 clones.</title>
        <authorList>
            <person name="Nakamura Y."/>
            <person name="Sato S."/>
            <person name="Kaneko T."/>
            <person name="Kotani H."/>
            <person name="Asamizu E."/>
            <person name="Miyajima N."/>
            <person name="Tabata S."/>
        </authorList>
    </citation>
    <scope>NUCLEOTIDE SEQUENCE [LARGE SCALE GENOMIC DNA]</scope>
    <source>
        <strain>cv. Columbia</strain>
    </source>
</reference>
<reference evidence="6" key="2">
    <citation type="journal article" date="2017" name="Plant J.">
        <title>Araport11: a complete reannotation of the Arabidopsis thaliana reference genome.</title>
        <authorList>
            <person name="Cheng C.Y."/>
            <person name="Krishnakumar V."/>
            <person name="Chan A.P."/>
            <person name="Thibaud-Nissen F."/>
            <person name="Schobel S."/>
            <person name="Town C.D."/>
        </authorList>
    </citation>
    <scope>GENOME REANNOTATION</scope>
    <source>
        <strain>cv. Columbia</strain>
    </source>
</reference>
<reference key="3">
    <citation type="journal article" date="2003" name="Science">
        <title>Empirical analysis of transcriptional activity in the Arabidopsis genome.</title>
        <authorList>
            <person name="Yamada K."/>
            <person name="Lim J."/>
            <person name="Dale J.M."/>
            <person name="Chen H."/>
            <person name="Shinn P."/>
            <person name="Palm C.J."/>
            <person name="Southwick A.M."/>
            <person name="Wu H.C."/>
            <person name="Kim C.J."/>
            <person name="Nguyen M."/>
            <person name="Pham P.K."/>
            <person name="Cheuk R.F."/>
            <person name="Karlin-Newmann G."/>
            <person name="Liu S.X."/>
            <person name="Lam B."/>
            <person name="Sakano H."/>
            <person name="Wu T."/>
            <person name="Yu G."/>
            <person name="Miranda M."/>
            <person name="Quach H.L."/>
            <person name="Tripp M."/>
            <person name="Chang C.H."/>
            <person name="Lee J.M."/>
            <person name="Toriumi M.J."/>
            <person name="Chan M.M."/>
            <person name="Tang C.C."/>
            <person name="Onodera C.S."/>
            <person name="Deng J.M."/>
            <person name="Akiyama K."/>
            <person name="Ansari Y."/>
            <person name="Arakawa T."/>
            <person name="Banh J."/>
            <person name="Banno F."/>
            <person name="Bowser L."/>
            <person name="Brooks S.Y."/>
            <person name="Carninci P."/>
            <person name="Chao Q."/>
            <person name="Choy N."/>
            <person name="Enju A."/>
            <person name="Goldsmith A.D."/>
            <person name="Gurjal M."/>
            <person name="Hansen N.F."/>
            <person name="Hayashizaki Y."/>
            <person name="Johnson-Hopson C."/>
            <person name="Hsuan V.W."/>
            <person name="Iida K."/>
            <person name="Karnes M."/>
            <person name="Khan S."/>
            <person name="Koesema E."/>
            <person name="Ishida J."/>
            <person name="Jiang P.X."/>
            <person name="Jones T."/>
            <person name="Kawai J."/>
            <person name="Kamiya A."/>
            <person name="Meyers C."/>
            <person name="Nakajima M."/>
            <person name="Narusaka M."/>
            <person name="Seki M."/>
            <person name="Sakurai T."/>
            <person name="Satou M."/>
            <person name="Tamse R."/>
            <person name="Vaysberg M."/>
            <person name="Wallender E.K."/>
            <person name="Wong C."/>
            <person name="Yamamura Y."/>
            <person name="Yuan S."/>
            <person name="Shinozaki K."/>
            <person name="Davis R.W."/>
            <person name="Theologis A."/>
            <person name="Ecker J.R."/>
        </authorList>
    </citation>
    <scope>NUCLEOTIDE SEQUENCE [LARGE SCALE MRNA]</scope>
    <source>
        <strain>cv. Columbia</strain>
    </source>
</reference>
<reference evidence="6" key="4">
    <citation type="submission" date="2002-03" db="EMBL/GenBank/DDBJ databases">
        <title>Full-length cDNA from Arabidopsis thaliana.</title>
        <authorList>
            <person name="Brover V.V."/>
            <person name="Troukhan M.E."/>
            <person name="Alexandrov N.A."/>
            <person name="Lu Y.-P."/>
            <person name="Flavell R.B."/>
            <person name="Feldmann K.A."/>
        </authorList>
    </citation>
    <scope>NUCLEOTIDE SEQUENCE [LARGE SCALE MRNA]</scope>
</reference>
<reference evidence="6" key="5">
    <citation type="journal article" date="2001" name="Plant Physiol.">
        <title>Proteomic approach to identify novel mitochondrial proteins in Arabidopsis.</title>
        <authorList>
            <person name="Kruft V."/>
            <person name="Eubel H."/>
            <person name="Jaensch L."/>
            <person name="Werhahn W."/>
            <person name="Braun H.-P."/>
        </authorList>
    </citation>
    <scope>PROTEIN SEQUENCE OF 174-186</scope>
    <scope>SUBCELLULAR LOCATION</scope>
    <source>
        <tissue>Leaf</tissue>
        <tissue>Stem</tissue>
    </source>
</reference>
<reference key="6">
    <citation type="journal article" date="2004" name="Plant Cell">
        <title>Experimental analysis of the Arabidopsis mitochondrial proteome highlights signaling and regulatory components, provides assessment of targeting prediction programs, and indicates plant-specific mitochondrial proteins.</title>
        <authorList>
            <person name="Heazlewood J.L."/>
            <person name="Tonti-Filippini J.S."/>
            <person name="Gout A.M."/>
            <person name="Day D.A."/>
            <person name="Whelan J."/>
            <person name="Millar A.H."/>
        </authorList>
    </citation>
    <scope>IDENTIFICATION BY MASS SPECTROMETRY</scope>
    <scope>SUBCELLULAR LOCATION [LARGE SCALE ANALYSIS]</scope>
    <source>
        <strain>cv. Landsberg erecta</strain>
    </source>
</reference>
<reference key="7">
    <citation type="journal article" date="2004" name="Plant Mol. Biol.">
        <title>Gamma carbonic anhydrase like complex interact with plant mitochondrial complex I.</title>
        <authorList>
            <person name="Perales M."/>
            <person name="Parisi G."/>
            <person name="Fornasari M.S."/>
            <person name="Colaneri A."/>
            <person name="Villarreal F."/>
            <person name="Gonzalez-Schain N."/>
            <person name="Echave J."/>
            <person name="Gomez-Casati D."/>
            <person name="Braun H.-P."/>
            <person name="Araya A."/>
            <person name="Zabaleta E."/>
        </authorList>
    </citation>
    <scope>INTERACTION WITH GAMMACA2</scope>
    <scope>SUBUNIT</scope>
    <scope>SUBCELLULAR LOCATION</scope>
</reference>
<organism evidence="7">
    <name type="scientific">Arabidopsis thaliana</name>
    <name type="common">Mouse-ear cress</name>
    <dbReference type="NCBI Taxonomy" id="3702"/>
    <lineage>
        <taxon>Eukaryota</taxon>
        <taxon>Viridiplantae</taxon>
        <taxon>Streptophyta</taxon>
        <taxon>Embryophyta</taxon>
        <taxon>Tracheophyta</taxon>
        <taxon>Spermatophyta</taxon>
        <taxon>Magnoliopsida</taxon>
        <taxon>eudicotyledons</taxon>
        <taxon>Gunneridae</taxon>
        <taxon>Pentapetalae</taxon>
        <taxon>rosids</taxon>
        <taxon>malvids</taxon>
        <taxon>Brassicales</taxon>
        <taxon>Brassicaceae</taxon>
        <taxon>Camelineae</taxon>
        <taxon>Arabidopsis</taxon>
    </lineage>
</organism>
<evidence type="ECO:0000250" key="1"/>
<evidence type="ECO:0000255" key="2"/>
<evidence type="ECO:0000269" key="3">
    <source>
    </source>
</evidence>
<evidence type="ECO:0000269" key="4">
    <source>
    </source>
</evidence>
<evidence type="ECO:0000269" key="5">
    <source>
    </source>
</evidence>
<evidence type="ECO:0000305" key="6"/>
<evidence type="ECO:0000312" key="7">
    <source>
        <dbReference type="EMBL" id="BAB08816.1"/>
    </source>
</evidence>
<sequence>MATSIARLSRRGVTSNLIRRCFAAEAALARKTELPKPQFTVSPSTDRVKWDYRGQRQIIPLGQWLPKVAVDAYVAPNVVLAGQVTVWDGSSVWNGAVLRGDLNKITVGFCSNVQERCVVHAAWSSPTGLPAATIIDRYVTVGAYSLLRSCTIEPECIIGQHSILMEGSLVETRSILEAGSVVPPGRRIPSGELWGGNPARFIRTLTNEETLEIPKLAVAINHLSGDYFSEFLPYSTVYLEVEKFKKSLGIAV</sequence>
<feature type="transit peptide" description="Mitochondrion" evidence="2">
    <location>
        <begin position="1"/>
        <end position="29"/>
    </location>
</feature>
<feature type="chain" id="PRO_0000220588" description="Gamma carbonic anhydrase-like 1, mitochondrial">
    <location>
        <begin position="30"/>
        <end position="252"/>
    </location>
</feature>
<feature type="binding site" evidence="6">
    <location>
        <begin position="99"/>
        <end position="101"/>
    </location>
    <ligand>
        <name>substrate</name>
    </ligand>
</feature>
<feature type="binding site" evidence="6">
    <location>
        <begin position="114"/>
        <end position="115"/>
    </location>
    <ligand>
        <name>substrate</name>
    </ligand>
</feature>
<feature type="binding site" evidence="6">
    <location>
        <position position="120"/>
    </location>
    <ligand>
        <name>Zn(2+)</name>
        <dbReference type="ChEBI" id="CHEBI:29105"/>
    </ligand>
</feature>
<feature type="binding site" evidence="6">
    <location>
        <position position="148"/>
    </location>
    <ligand>
        <name>substrate</name>
    </ligand>
</feature>
<feature type="binding site" evidence="6">
    <location>
        <position position="160"/>
    </location>
    <ligand>
        <name>substrate</name>
    </ligand>
</feature>
<feature type="binding site" evidence="6">
    <location>
        <position position="227"/>
    </location>
    <ligand>
        <name>substrate</name>
    </ligand>
</feature>
<feature type="sequence conflict" description="In Ref. 4; AAM64682." evidence="6" ref="4">
    <original>R</original>
    <variation>L</variation>
    <location>
        <position position="47"/>
    </location>
</feature>
<feature type="sequence conflict" description="In Ref. 3; AAK96778/AAL47391." evidence="6" ref="3">
    <original>E</original>
    <variation>G</variation>
    <location>
        <position position="115"/>
    </location>
</feature>
<feature type="sequence conflict" description="In Ref. 4; AAM64682." evidence="6" ref="4">
    <original>V</original>
    <variation>L</variation>
    <location>
        <position position="218"/>
    </location>
</feature>
<gene>
    <name type="primary">GAMMACAL1</name>
    <name type="ordered locus">At5g63510</name>
    <name type="ORF">MLE2.14</name>
</gene>
<dbReference type="EMBL" id="AB007649">
    <property type="protein sequence ID" value="BAB08816.1"/>
    <property type="molecule type" value="Genomic_DNA"/>
</dbReference>
<dbReference type="EMBL" id="CP002688">
    <property type="protein sequence ID" value="AED97760.1"/>
    <property type="molecule type" value="Genomic_DNA"/>
</dbReference>
<dbReference type="EMBL" id="AY054587">
    <property type="protein sequence ID" value="AAK96778.1"/>
    <property type="molecule type" value="mRNA"/>
</dbReference>
<dbReference type="EMBL" id="AY064687">
    <property type="protein sequence ID" value="AAL47391.1"/>
    <property type="molecule type" value="mRNA"/>
</dbReference>
<dbReference type="EMBL" id="AY087124">
    <property type="protein sequence ID" value="AAM64682.1"/>
    <property type="molecule type" value="mRNA"/>
</dbReference>
<dbReference type="RefSeq" id="NP_201156.1">
    <molecule id="Q9FMV1-1"/>
    <property type="nucleotide sequence ID" value="NM_125746.4"/>
</dbReference>
<dbReference type="PDB" id="7A23">
    <property type="method" value="EM"/>
    <property type="resolution" value="3.70 A"/>
    <property type="chains" value="o=1-252"/>
</dbReference>
<dbReference type="PDB" id="7A24">
    <property type="method" value="EM"/>
    <property type="resolution" value="3.80 A"/>
    <property type="chains" value="o=1-252"/>
</dbReference>
<dbReference type="PDBsum" id="7A23"/>
<dbReference type="PDBsum" id="7A24"/>
<dbReference type="EMDB" id="EMD-11614"/>
<dbReference type="EMDB" id="EMD-11615"/>
<dbReference type="SMR" id="Q9FMV1"/>
<dbReference type="BioGRID" id="21712">
    <property type="interactions" value="34"/>
</dbReference>
<dbReference type="FunCoup" id="Q9FMV1">
    <property type="interactions" value="333"/>
</dbReference>
<dbReference type="IntAct" id="Q9FMV1">
    <property type="interactions" value="2"/>
</dbReference>
<dbReference type="STRING" id="3702.Q9FMV1"/>
<dbReference type="GlyGen" id="Q9FMV1">
    <property type="glycosylation" value="1 site"/>
</dbReference>
<dbReference type="iPTMnet" id="Q9FMV1"/>
<dbReference type="PaxDb" id="3702-AT5G63510.2"/>
<dbReference type="ProteomicsDB" id="221887">
    <molecule id="Q9FMV1-1"/>
</dbReference>
<dbReference type="EnsemblPlants" id="AT5G63510.1">
    <molecule id="Q9FMV1-1"/>
    <property type="protein sequence ID" value="AT5G63510.1"/>
    <property type="gene ID" value="AT5G63510"/>
</dbReference>
<dbReference type="GeneID" id="836470"/>
<dbReference type="Gramene" id="AT5G63510.1">
    <molecule id="Q9FMV1-1"/>
    <property type="protein sequence ID" value="AT5G63510.1"/>
    <property type="gene ID" value="AT5G63510"/>
</dbReference>
<dbReference type="KEGG" id="ath:AT5G63510"/>
<dbReference type="Araport" id="AT5G63510"/>
<dbReference type="TAIR" id="AT5G63510">
    <property type="gene designation" value="GAMMA CAL1"/>
</dbReference>
<dbReference type="HOGENOM" id="CLU_064827_0_1_1"/>
<dbReference type="InParanoid" id="Q9FMV1"/>
<dbReference type="OrthoDB" id="25818at2759"/>
<dbReference type="PhylomeDB" id="Q9FMV1"/>
<dbReference type="BioCyc" id="ARA:AT5G63510-MONOMER"/>
<dbReference type="BioCyc" id="MetaCyc:AT5G63510-MONOMER"/>
<dbReference type="BRENDA" id="4.2.1.1">
    <property type="organism ID" value="399"/>
</dbReference>
<dbReference type="PRO" id="PR:Q9FMV1"/>
<dbReference type="Proteomes" id="UP000006548">
    <property type="component" value="Chromosome 5"/>
</dbReference>
<dbReference type="ExpressionAtlas" id="Q9FMV1">
    <property type="expression patterns" value="baseline and differential"/>
</dbReference>
<dbReference type="GO" id="GO:0031966">
    <property type="term" value="C:mitochondrial membrane"/>
    <property type="evidence" value="ECO:0007669"/>
    <property type="project" value="UniProtKB-SubCell"/>
</dbReference>
<dbReference type="GO" id="GO:0046872">
    <property type="term" value="F:metal ion binding"/>
    <property type="evidence" value="ECO:0007669"/>
    <property type="project" value="UniProtKB-KW"/>
</dbReference>
<dbReference type="CDD" id="cd04645">
    <property type="entry name" value="LbH_gamma_CA_like"/>
    <property type="match status" value="1"/>
</dbReference>
<dbReference type="FunFam" id="2.160.10.10:FF:000035">
    <property type="entry name" value="Gamma carbonic anhydrase-like 1, mitochondrial"/>
    <property type="match status" value="1"/>
</dbReference>
<dbReference type="Gene3D" id="2.160.10.10">
    <property type="entry name" value="Hexapeptide repeat proteins"/>
    <property type="match status" value="1"/>
</dbReference>
<dbReference type="InterPro" id="IPR047324">
    <property type="entry name" value="LbH_gamma_CA-like"/>
</dbReference>
<dbReference type="InterPro" id="IPR050484">
    <property type="entry name" value="Transf_Hexapept/Carb_Anhydrase"/>
</dbReference>
<dbReference type="InterPro" id="IPR011004">
    <property type="entry name" value="Trimer_LpxA-like_sf"/>
</dbReference>
<dbReference type="PANTHER" id="PTHR13061">
    <property type="entry name" value="DYNACTIN SUBUNIT P25"/>
    <property type="match status" value="1"/>
</dbReference>
<dbReference type="PANTHER" id="PTHR13061:SF29">
    <property type="entry name" value="GAMMA CARBONIC ANHYDRASE-LIKE 1, MITOCHONDRIAL-RELATED"/>
    <property type="match status" value="1"/>
</dbReference>
<dbReference type="SUPFAM" id="SSF51161">
    <property type="entry name" value="Trimeric LpxA-like enzymes"/>
    <property type="match status" value="1"/>
</dbReference>
<keyword id="KW-0002">3D-structure</keyword>
<keyword id="KW-0025">Alternative splicing</keyword>
<keyword id="KW-0903">Direct protein sequencing</keyword>
<keyword id="KW-0472">Membrane</keyword>
<keyword id="KW-0479">Metal-binding</keyword>
<keyword id="KW-0496">Mitochondrion</keyword>
<keyword id="KW-1185">Reference proteome</keyword>
<keyword id="KW-0809">Transit peptide</keyword>
<keyword id="KW-0862">Zinc</keyword>